<feature type="chain" id="PRO_1000129464" description="Nicotinate phosphoribosyltransferase">
    <location>
        <begin position="1"/>
        <end position="399"/>
    </location>
</feature>
<feature type="modified residue" description="Phosphohistidine; by autocatalysis" evidence="1">
    <location>
        <position position="217"/>
    </location>
</feature>
<evidence type="ECO:0000255" key="1">
    <source>
        <dbReference type="HAMAP-Rule" id="MF_00570"/>
    </source>
</evidence>
<proteinExistence type="inferred from homology"/>
<name>PNCB_BURO0</name>
<protein>
    <recommendedName>
        <fullName evidence="1">Nicotinate phosphoribosyltransferase</fullName>
        <shortName evidence="1">NAPRTase</shortName>
        <ecNumber evidence="1">6.3.4.21</ecNumber>
    </recommendedName>
</protein>
<reference key="1">
    <citation type="submission" date="2008-02" db="EMBL/GenBank/DDBJ databases">
        <title>Complete sequence of chromosome 1 of Burkholderia cenocepacia MC0-3.</title>
        <authorList>
            <person name="Copeland A."/>
            <person name="Lucas S."/>
            <person name="Lapidus A."/>
            <person name="Barry K."/>
            <person name="Bruce D."/>
            <person name="Goodwin L."/>
            <person name="Glavina del Rio T."/>
            <person name="Dalin E."/>
            <person name="Tice H."/>
            <person name="Pitluck S."/>
            <person name="Chain P."/>
            <person name="Malfatti S."/>
            <person name="Shin M."/>
            <person name="Vergez L."/>
            <person name="Schmutz J."/>
            <person name="Larimer F."/>
            <person name="Land M."/>
            <person name="Hauser L."/>
            <person name="Kyrpides N."/>
            <person name="Mikhailova N."/>
            <person name="Tiedje J."/>
            <person name="Richardson P."/>
        </authorList>
    </citation>
    <scope>NUCLEOTIDE SEQUENCE [LARGE SCALE GENOMIC DNA]</scope>
    <source>
        <strain>MC0-3</strain>
    </source>
</reference>
<sequence>MIITSLLDTDLYKFTMMQVVLHHFPAANVEYRFRCRTPGVDLVPYIDEIRDEVRGLCSLRFVDVELDYLRRMRFIKSDFVDFLALFHLNEKYISITPSPKGNGEIDIVIEGPWLHTILFEIPVLAIVNEVYFRNTQREPDYREGRERLREKIKLLGAKPEFADCKIADYGTRRRFSKVWHEEVALTLRDGLGPQFAGTSNVLYAMKHDITPLGTMAHEYLQACQALGPRLRDSQIYGFEMWAKEYRGDLGIALSDVYGMDAFLNDFDMYFCKLFDGARHDSGDPFEWGERMLRHYEANRCDPRTKVLVFSDALDIPKVMQLYERFRGRCKLAFGVGTNLTNDLGYVPLQIVIKMVRCNGQPVAKLSDSPGKSMCDDKAYLAYLRQVFGIAQPVEEDASK</sequence>
<comment type="function">
    <text evidence="1">Catalyzes the synthesis of beta-nicotinate D-ribonucleotide from nicotinate and 5-phospho-D-ribose 1-phosphate at the expense of ATP.</text>
</comment>
<comment type="catalytic activity">
    <reaction evidence="1">
        <text>nicotinate + 5-phospho-alpha-D-ribose 1-diphosphate + ATP + H2O = nicotinate beta-D-ribonucleotide + ADP + phosphate + diphosphate</text>
        <dbReference type="Rhea" id="RHEA:36163"/>
        <dbReference type="ChEBI" id="CHEBI:15377"/>
        <dbReference type="ChEBI" id="CHEBI:30616"/>
        <dbReference type="ChEBI" id="CHEBI:32544"/>
        <dbReference type="ChEBI" id="CHEBI:33019"/>
        <dbReference type="ChEBI" id="CHEBI:43474"/>
        <dbReference type="ChEBI" id="CHEBI:57502"/>
        <dbReference type="ChEBI" id="CHEBI:58017"/>
        <dbReference type="ChEBI" id="CHEBI:456216"/>
        <dbReference type="EC" id="6.3.4.21"/>
    </reaction>
</comment>
<comment type="pathway">
    <text evidence="1">Cofactor biosynthesis; NAD(+) biosynthesis; nicotinate D-ribonucleotide from nicotinate: step 1/1.</text>
</comment>
<comment type="PTM">
    <text evidence="1">Transiently phosphorylated on a His residue during the reaction cycle. Phosphorylation strongly increases the affinity for substrates and increases the rate of nicotinate D-ribonucleotide production. Dephosphorylation regenerates the low-affinity form of the enzyme, leading to product release.</text>
</comment>
<comment type="similarity">
    <text evidence="1">Belongs to the NAPRTase family.</text>
</comment>
<keyword id="KW-0436">Ligase</keyword>
<keyword id="KW-0597">Phosphoprotein</keyword>
<keyword id="KW-0662">Pyridine nucleotide biosynthesis</keyword>
<dbReference type="EC" id="6.3.4.21" evidence="1"/>
<dbReference type="EMBL" id="CP000958">
    <property type="protein sequence ID" value="ACA90236.1"/>
    <property type="molecule type" value="Genomic_DNA"/>
</dbReference>
<dbReference type="RefSeq" id="WP_012328139.1">
    <property type="nucleotide sequence ID" value="NC_010508.1"/>
</dbReference>
<dbReference type="SMR" id="B1JY80"/>
<dbReference type="GeneID" id="83047853"/>
<dbReference type="KEGG" id="bcm:Bcenmc03_1059"/>
<dbReference type="HOGENOM" id="CLU_030991_1_0_4"/>
<dbReference type="UniPathway" id="UPA00253">
    <property type="reaction ID" value="UER00457"/>
</dbReference>
<dbReference type="Proteomes" id="UP000002169">
    <property type="component" value="Chromosome 1"/>
</dbReference>
<dbReference type="GO" id="GO:0005829">
    <property type="term" value="C:cytosol"/>
    <property type="evidence" value="ECO:0007669"/>
    <property type="project" value="TreeGrafter"/>
</dbReference>
<dbReference type="GO" id="GO:0004516">
    <property type="term" value="F:nicotinate phosphoribosyltransferase activity"/>
    <property type="evidence" value="ECO:0007669"/>
    <property type="project" value="UniProtKB-UniRule"/>
</dbReference>
<dbReference type="GO" id="GO:0034355">
    <property type="term" value="P:NAD biosynthetic process via the salvage pathway"/>
    <property type="evidence" value="ECO:0007669"/>
    <property type="project" value="TreeGrafter"/>
</dbReference>
<dbReference type="CDD" id="cd01401">
    <property type="entry name" value="PncB_like"/>
    <property type="match status" value="1"/>
</dbReference>
<dbReference type="Gene3D" id="3.20.140.10">
    <property type="entry name" value="nicotinate phosphoribosyltransferase"/>
    <property type="match status" value="1"/>
</dbReference>
<dbReference type="HAMAP" id="MF_00570">
    <property type="entry name" value="NAPRTase"/>
    <property type="match status" value="1"/>
</dbReference>
<dbReference type="InterPro" id="IPR041525">
    <property type="entry name" value="N/Namide_PRibTrfase"/>
</dbReference>
<dbReference type="InterPro" id="IPR040727">
    <property type="entry name" value="NAPRTase_N"/>
</dbReference>
<dbReference type="InterPro" id="IPR006406">
    <property type="entry name" value="Nic_PRibTrfase"/>
</dbReference>
<dbReference type="InterPro" id="IPR007229">
    <property type="entry name" value="Nic_PRibTrfase-Fam"/>
</dbReference>
<dbReference type="InterPro" id="IPR036068">
    <property type="entry name" value="Nicotinate_pribotase-like_C"/>
</dbReference>
<dbReference type="NCBIfam" id="TIGR01514">
    <property type="entry name" value="NAPRTase"/>
    <property type="match status" value="1"/>
</dbReference>
<dbReference type="NCBIfam" id="NF003704">
    <property type="entry name" value="PRK05321.1"/>
    <property type="match status" value="1"/>
</dbReference>
<dbReference type="PANTHER" id="PTHR11098">
    <property type="entry name" value="NICOTINATE PHOSPHORIBOSYLTRANSFERASE"/>
    <property type="match status" value="1"/>
</dbReference>
<dbReference type="PANTHER" id="PTHR11098:SF1">
    <property type="entry name" value="NICOTINATE PHOSPHORIBOSYLTRANSFERASE"/>
    <property type="match status" value="1"/>
</dbReference>
<dbReference type="Pfam" id="PF04095">
    <property type="entry name" value="NAPRTase"/>
    <property type="match status" value="1"/>
</dbReference>
<dbReference type="Pfam" id="PF17767">
    <property type="entry name" value="NAPRTase_N"/>
    <property type="match status" value="1"/>
</dbReference>
<dbReference type="PIRSF" id="PIRSF000484">
    <property type="entry name" value="NAPRT"/>
    <property type="match status" value="1"/>
</dbReference>
<dbReference type="SUPFAM" id="SSF51690">
    <property type="entry name" value="Nicotinate/Quinolinate PRTase C-terminal domain-like"/>
    <property type="match status" value="1"/>
</dbReference>
<dbReference type="SUPFAM" id="SSF54675">
    <property type="entry name" value="Nicotinate/Quinolinate PRTase N-terminal domain-like"/>
    <property type="match status" value="1"/>
</dbReference>
<organism>
    <name type="scientific">Burkholderia orbicola (strain MC0-3)</name>
    <dbReference type="NCBI Taxonomy" id="406425"/>
    <lineage>
        <taxon>Bacteria</taxon>
        <taxon>Pseudomonadati</taxon>
        <taxon>Pseudomonadota</taxon>
        <taxon>Betaproteobacteria</taxon>
        <taxon>Burkholderiales</taxon>
        <taxon>Burkholderiaceae</taxon>
        <taxon>Burkholderia</taxon>
        <taxon>Burkholderia cepacia complex</taxon>
        <taxon>Burkholderia orbicola</taxon>
    </lineage>
</organism>
<gene>
    <name evidence="1" type="primary">pncB</name>
    <name type="ordered locus">Bcenmc03_1059</name>
</gene>
<accession>B1JY80</accession>